<sequence>MLQEFKTFIMKGNVLDLAVGVIIGAAFGKIVNSAVNDLIMPVVGLALGKVDFSNLFISLKGGEYATVAAAKAAGAPTLNYGIFLNTTLDFLIMALVIFMIIKAANKVRKTEEPAPAPVPRECPFCKSAVHDEASRCPHCTSQLNATA</sequence>
<gene>
    <name evidence="1" type="primary">mscL</name>
    <name type="ordered locus">Glov_0172</name>
</gene>
<proteinExistence type="inferred from homology"/>
<protein>
    <recommendedName>
        <fullName evidence="1">Large-conductance mechanosensitive channel</fullName>
    </recommendedName>
</protein>
<keyword id="KW-0997">Cell inner membrane</keyword>
<keyword id="KW-1003">Cell membrane</keyword>
<keyword id="KW-0407">Ion channel</keyword>
<keyword id="KW-0406">Ion transport</keyword>
<keyword id="KW-0472">Membrane</keyword>
<keyword id="KW-1185">Reference proteome</keyword>
<keyword id="KW-0812">Transmembrane</keyword>
<keyword id="KW-1133">Transmembrane helix</keyword>
<keyword id="KW-0813">Transport</keyword>
<name>MSCL_TRIL1</name>
<accession>B3EA78</accession>
<comment type="function">
    <text evidence="1">Channel that opens in response to stretch forces in the membrane lipid bilayer. May participate in the regulation of osmotic pressure changes within the cell.</text>
</comment>
<comment type="subunit">
    <text evidence="1">Homopentamer.</text>
</comment>
<comment type="subcellular location">
    <subcellularLocation>
        <location evidence="1">Cell inner membrane</location>
        <topology evidence="1">Multi-pass membrane protein</topology>
    </subcellularLocation>
</comment>
<comment type="similarity">
    <text evidence="1">Belongs to the MscL family.</text>
</comment>
<evidence type="ECO:0000255" key="1">
    <source>
        <dbReference type="HAMAP-Rule" id="MF_00115"/>
    </source>
</evidence>
<dbReference type="EMBL" id="CP001089">
    <property type="protein sequence ID" value="ACD93906.1"/>
    <property type="molecule type" value="Genomic_DNA"/>
</dbReference>
<dbReference type="RefSeq" id="WP_012468264.1">
    <property type="nucleotide sequence ID" value="NC_010814.1"/>
</dbReference>
<dbReference type="STRING" id="398767.Glov_0172"/>
<dbReference type="KEGG" id="glo:Glov_0172"/>
<dbReference type="eggNOG" id="COG1970">
    <property type="taxonomic scope" value="Bacteria"/>
</dbReference>
<dbReference type="HOGENOM" id="CLU_095787_2_3_7"/>
<dbReference type="OrthoDB" id="9810350at2"/>
<dbReference type="Proteomes" id="UP000002420">
    <property type="component" value="Chromosome"/>
</dbReference>
<dbReference type="GO" id="GO:0005886">
    <property type="term" value="C:plasma membrane"/>
    <property type="evidence" value="ECO:0007669"/>
    <property type="project" value="UniProtKB-SubCell"/>
</dbReference>
<dbReference type="GO" id="GO:0008381">
    <property type="term" value="F:mechanosensitive monoatomic ion channel activity"/>
    <property type="evidence" value="ECO:0007669"/>
    <property type="project" value="UniProtKB-UniRule"/>
</dbReference>
<dbReference type="Gene3D" id="1.10.1200.120">
    <property type="entry name" value="Large-conductance mechanosensitive channel, MscL, domain 1"/>
    <property type="match status" value="1"/>
</dbReference>
<dbReference type="HAMAP" id="MF_00115">
    <property type="entry name" value="MscL"/>
    <property type="match status" value="1"/>
</dbReference>
<dbReference type="InterPro" id="IPR019823">
    <property type="entry name" value="Mechanosensitive_channel_CS"/>
</dbReference>
<dbReference type="InterPro" id="IPR001185">
    <property type="entry name" value="MS_channel"/>
</dbReference>
<dbReference type="InterPro" id="IPR037673">
    <property type="entry name" value="MSC/AndL"/>
</dbReference>
<dbReference type="InterPro" id="IPR036019">
    <property type="entry name" value="MscL_channel"/>
</dbReference>
<dbReference type="NCBIfam" id="TIGR00220">
    <property type="entry name" value="mscL"/>
    <property type="match status" value="1"/>
</dbReference>
<dbReference type="NCBIfam" id="NF010557">
    <property type="entry name" value="PRK13952.1"/>
    <property type="match status" value="1"/>
</dbReference>
<dbReference type="PANTHER" id="PTHR30266:SF2">
    <property type="entry name" value="LARGE-CONDUCTANCE MECHANOSENSITIVE CHANNEL"/>
    <property type="match status" value="1"/>
</dbReference>
<dbReference type="PANTHER" id="PTHR30266">
    <property type="entry name" value="MECHANOSENSITIVE CHANNEL MSCL"/>
    <property type="match status" value="1"/>
</dbReference>
<dbReference type="Pfam" id="PF01741">
    <property type="entry name" value="MscL"/>
    <property type="match status" value="1"/>
</dbReference>
<dbReference type="PRINTS" id="PR01264">
    <property type="entry name" value="MECHCHANNEL"/>
</dbReference>
<dbReference type="SUPFAM" id="SSF81330">
    <property type="entry name" value="Gated mechanosensitive channel"/>
    <property type="match status" value="1"/>
</dbReference>
<dbReference type="PROSITE" id="PS01327">
    <property type="entry name" value="MSCL"/>
    <property type="match status" value="1"/>
</dbReference>
<reference key="1">
    <citation type="submission" date="2008-05" db="EMBL/GenBank/DDBJ databases">
        <title>Complete sequence of chromosome of Geobacter lovleyi SZ.</title>
        <authorList>
            <consortium name="US DOE Joint Genome Institute"/>
            <person name="Lucas S."/>
            <person name="Copeland A."/>
            <person name="Lapidus A."/>
            <person name="Glavina del Rio T."/>
            <person name="Dalin E."/>
            <person name="Tice H."/>
            <person name="Bruce D."/>
            <person name="Goodwin L."/>
            <person name="Pitluck S."/>
            <person name="Chertkov O."/>
            <person name="Meincke L."/>
            <person name="Brettin T."/>
            <person name="Detter J.C."/>
            <person name="Han C."/>
            <person name="Tapia R."/>
            <person name="Kuske C.R."/>
            <person name="Schmutz J."/>
            <person name="Larimer F."/>
            <person name="Land M."/>
            <person name="Hauser L."/>
            <person name="Kyrpides N."/>
            <person name="Mikhailova N."/>
            <person name="Sung Y."/>
            <person name="Fletcher K.E."/>
            <person name="Ritalahti K.M."/>
            <person name="Loeffler F.E."/>
            <person name="Richardson P."/>
        </authorList>
    </citation>
    <scope>NUCLEOTIDE SEQUENCE [LARGE SCALE GENOMIC DNA]</scope>
    <source>
        <strain>ATCC BAA-1151 / DSM 17278 / SZ</strain>
    </source>
</reference>
<organism>
    <name type="scientific">Trichlorobacter lovleyi (strain ATCC BAA-1151 / DSM 17278 / SZ)</name>
    <name type="common">Geobacter lovleyi</name>
    <dbReference type="NCBI Taxonomy" id="398767"/>
    <lineage>
        <taxon>Bacteria</taxon>
        <taxon>Pseudomonadati</taxon>
        <taxon>Thermodesulfobacteriota</taxon>
        <taxon>Desulfuromonadia</taxon>
        <taxon>Geobacterales</taxon>
        <taxon>Geobacteraceae</taxon>
        <taxon>Trichlorobacter</taxon>
    </lineage>
</organism>
<feature type="chain" id="PRO_1000094895" description="Large-conductance mechanosensitive channel">
    <location>
        <begin position="1"/>
        <end position="147"/>
    </location>
</feature>
<feature type="transmembrane region" description="Helical" evidence="1">
    <location>
        <begin position="8"/>
        <end position="28"/>
    </location>
</feature>
<feature type="transmembrane region" description="Helical" evidence="1">
    <location>
        <begin position="81"/>
        <end position="101"/>
    </location>
</feature>